<comment type="function">
    <text evidence="4">Central component of the condensin complex, a complex required for conversion of interphase chromatin into mitotic-like condense chromosomes. The condensin complex probably introduces positive supercoils into relaxed DNA in the presence of type I topoisomerases and converts nicked DNA into positive knotted forms in the presence of type II topoisomerases.</text>
</comment>
<comment type="subunit">
    <text evidence="3 4 5 6">Forms a heterodimer with SMC4. Component of the condensin complex, which contains the SMC2 and SMC4 heterodimer, and three non SMC subunits that probably regulate the complex: BRRN1/CAPH, CNAP1/CAPD2 and CAPG. Interacts with BRD4 (isoform B), leading to insulate chromatin from DNA damage response pathway.</text>
</comment>
<comment type="interaction">
    <interactant intactId="EBI-355822">
        <id>O95347</id>
    </interactant>
    <interactant intactId="EBI-1046410">
        <id>Q15003</id>
        <label>NCAPH</label>
    </interactant>
    <organismsDiffer>false</organismsDiffer>
    <experiments>6</experiments>
</comment>
<comment type="interaction">
    <interactant intactId="EBI-355822">
        <id>O95347</id>
    </interactant>
    <interactant intactId="EBI-2548296">
        <id>Q6IBW4</id>
        <label>NCAPH2</label>
    </interactant>
    <organismsDiffer>false</organismsDiffer>
    <experiments>6</experiments>
</comment>
<comment type="interaction">
    <interactant intactId="EBI-355822">
        <id>O95347</id>
    </interactant>
    <interactant intactId="EBI-356173">
        <id>Q9NTJ3</id>
        <label>SMC4</label>
    </interactant>
    <organismsDiffer>false</organismsDiffer>
    <experiments>3</experiments>
</comment>
<comment type="subcellular location">
    <subcellularLocation>
        <location evidence="3">Nucleus</location>
    </subcellularLocation>
    <subcellularLocation>
        <location evidence="3">Cytoplasm</location>
    </subcellularLocation>
    <subcellularLocation>
        <location evidence="3">Chromosome</location>
    </subcellularLocation>
    <text>In interphase cells, the majority of the condensin complex is found in the cytoplasm, while a minority of the complex is associated with chromatin. A subpopulation of the complex however remains associated with chromosome foci in interphase cells. During mitosis, most of the condensin complex is associated with the chromatin. At the onset of prophase, the regulatory subunits of the complex are phosphorylated by CDC2, leading to condensin's association with chromosome arms and to chromosome condensation. Dissociation from chromosomes is observed in late telophase.</text>
</comment>
<comment type="alternative products">
    <event type="alternative splicing"/>
    <isoform>
        <id>O95347-1</id>
        <name>1</name>
        <sequence type="displayed"/>
    </isoform>
    <isoform>
        <id>O95347-2</id>
        <name>2</name>
        <sequence type="described" ref="VSP_007243 VSP_007244"/>
    </isoform>
</comment>
<comment type="domain">
    <text evidence="1">The SMC hinge domain, which separates the large intramolecular coiled coil regions, allows the heterodimerization with SMC4, forming a V-shaped heterodimer.</text>
</comment>
<comment type="similarity">
    <text evidence="8">Belongs to the SMC family. SMC2 subfamily.</text>
</comment>
<comment type="sequence caution" evidence="8">
    <conflict type="frameshift">
        <sequence resource="EMBL-CDS" id="AAC72360"/>
    </conflict>
</comment>
<comment type="sequence caution" evidence="8">
    <conflict type="erroneous initiation">
        <sequence resource="EMBL-CDS" id="AAF29579"/>
    </conflict>
</comment>
<proteinExistence type="evidence at protein level"/>
<gene>
    <name type="primary">SMC2</name>
    <name type="synonym">CAPE</name>
    <name type="synonym">SMC2L1</name>
    <name type="ORF">PRO0324</name>
</gene>
<feature type="chain" id="PRO_0000118995" description="Structural maintenance of chromosomes protein 2">
    <location>
        <begin position="1"/>
        <end position="1197"/>
    </location>
</feature>
<feature type="domain" description="SMC hinge">
    <location>
        <begin position="522"/>
        <end position="640"/>
    </location>
</feature>
<feature type="coiled-coil region" evidence="2">
    <location>
        <begin position="173"/>
        <end position="507"/>
    </location>
</feature>
<feature type="coiled-coil region" evidence="2">
    <location>
        <begin position="672"/>
        <end position="926"/>
    </location>
</feature>
<feature type="coiled-coil region" evidence="2">
    <location>
        <begin position="963"/>
        <end position="1031"/>
    </location>
</feature>
<feature type="binding site" evidence="2">
    <location>
        <begin position="32"/>
        <end position="39"/>
    </location>
    <ligand>
        <name>ATP</name>
        <dbReference type="ChEBI" id="CHEBI:30616"/>
    </ligand>
</feature>
<feature type="modified residue" description="N6-acetyllysine" evidence="9">
    <location>
        <position position="114"/>
    </location>
</feature>
<feature type="modified residue" description="N6-acetyllysine" evidence="9">
    <location>
        <position position="222"/>
    </location>
</feature>
<feature type="modified residue" description="N6-acetyllysine" evidence="9">
    <location>
        <position position="677"/>
    </location>
</feature>
<feature type="modified residue" description="N6-acetyllysine" evidence="9">
    <location>
        <position position="1158"/>
    </location>
</feature>
<feature type="modified residue" description="N6-acetyllysine" evidence="9">
    <location>
        <position position="1160"/>
    </location>
</feature>
<feature type="splice variant" id="VSP_007243" description="In isoform 2." evidence="7">
    <original>SLVALSLIL</original>
    <variation>QKQQNHTTG</variation>
    <location>
        <begin position="1091"/>
        <end position="1099"/>
    </location>
</feature>
<feature type="splice variant" id="VSP_007244" description="In isoform 2." evidence="7">
    <location>
        <begin position="1100"/>
        <end position="1197"/>
    </location>
</feature>
<feature type="sequence variant" id="VAR_047489" description="In dbSNP:rs4562395.">
    <original>E</original>
    <variation>K</variation>
    <location>
        <position position="1009"/>
    </location>
</feature>
<feature type="sequence conflict" description="In Ref. 1; AAC72360." evidence="8" ref="1">
    <original>G</original>
    <variation>V</variation>
    <location>
        <position position="294"/>
    </location>
</feature>
<feature type="sequence conflict" description="In Ref. 1; AAC72360." evidence="8" ref="1">
    <original>N</original>
    <variation>H</variation>
    <location>
        <position position="916"/>
    </location>
</feature>
<feature type="sequence conflict" description="In Ref. 1; AAC72360." evidence="8" ref="1">
    <original>Y</original>
    <variation>C</variation>
    <location>
        <position position="998"/>
    </location>
</feature>
<feature type="helix" evidence="10">
    <location>
        <begin position="476"/>
        <end position="502"/>
    </location>
</feature>
<feature type="helix" evidence="10">
    <location>
        <begin position="504"/>
        <end position="506"/>
    </location>
</feature>
<feature type="helix" evidence="10">
    <location>
        <begin position="519"/>
        <end position="521"/>
    </location>
</feature>
<feature type="strand" evidence="10">
    <location>
        <begin position="522"/>
        <end position="525"/>
    </location>
</feature>
<feature type="helix" evidence="10">
    <location>
        <begin position="526"/>
        <end position="529"/>
    </location>
</feature>
<feature type="strand" evidence="10">
    <location>
        <begin position="531"/>
        <end position="533"/>
    </location>
</feature>
<feature type="helix" evidence="10">
    <location>
        <begin position="535"/>
        <end position="537"/>
    </location>
</feature>
<feature type="helix" evidence="10">
    <location>
        <begin position="538"/>
        <end position="545"/>
    </location>
</feature>
<feature type="helix" evidence="10">
    <location>
        <begin position="546"/>
        <end position="550"/>
    </location>
</feature>
<feature type="strand" evidence="10">
    <location>
        <begin position="552"/>
        <end position="555"/>
    </location>
</feature>
<feature type="helix" evidence="10">
    <location>
        <begin position="557"/>
        <end position="566"/>
    </location>
</feature>
<feature type="strand" evidence="10">
    <location>
        <begin position="573"/>
        <end position="577"/>
    </location>
</feature>
<feature type="turn" evidence="10">
    <location>
        <begin position="578"/>
        <end position="580"/>
    </location>
</feature>
<feature type="helix" evidence="10">
    <location>
        <begin position="588"/>
        <end position="598"/>
    </location>
</feature>
<feature type="strand" evidence="10">
    <location>
        <begin position="602"/>
        <end position="605"/>
    </location>
</feature>
<feature type="helix" evidence="10">
    <location>
        <begin position="606"/>
        <end position="609"/>
    </location>
</feature>
<feature type="helix" evidence="10">
    <location>
        <begin position="614"/>
        <end position="616"/>
    </location>
</feature>
<feature type="helix" evidence="10">
    <location>
        <begin position="617"/>
        <end position="624"/>
    </location>
</feature>
<feature type="strand" evidence="10">
    <location>
        <begin position="628"/>
        <end position="632"/>
    </location>
</feature>
<feature type="helix" evidence="10">
    <location>
        <begin position="633"/>
        <end position="640"/>
    </location>
</feature>
<feature type="turn" evidence="10">
    <location>
        <begin position="643"/>
        <end position="645"/>
    </location>
</feature>
<feature type="strand" evidence="10">
    <location>
        <begin position="649"/>
        <end position="651"/>
    </location>
</feature>
<feature type="strand" evidence="10">
    <location>
        <begin position="656"/>
        <end position="658"/>
    </location>
</feature>
<feature type="turn" evidence="10">
    <location>
        <begin position="659"/>
        <end position="661"/>
    </location>
</feature>
<feature type="strand" evidence="10">
    <location>
        <begin position="662"/>
        <end position="666"/>
    </location>
</feature>
<feature type="helix" evidence="10">
    <location>
        <begin position="674"/>
        <end position="704"/>
    </location>
</feature>
<protein>
    <recommendedName>
        <fullName>Structural maintenance of chromosomes protein 2</fullName>
        <shortName>SMC protein 2</shortName>
        <shortName>SMC-2</shortName>
    </recommendedName>
    <alternativeName>
        <fullName>Chromosome-associated protein E</fullName>
        <shortName>hCAP-E</shortName>
    </alternativeName>
    <alternativeName>
        <fullName>XCAP-E homolog</fullName>
    </alternativeName>
</protein>
<reference key="1">
    <citation type="journal article" date="1998" name="Proc. Natl. Acad. Sci. U.S.A.">
        <title>Identification of two distinct human SMC protein complexes involved in mitotic chromosome dynamics.</title>
        <authorList>
            <person name="Schmiesing J.A."/>
            <person name="Ball A.R. Jr."/>
            <person name="Gregson H.C."/>
            <person name="Alderton J.M."/>
            <person name="Zhou S."/>
            <person name="Yokomori K."/>
        </authorList>
    </citation>
    <scope>NUCLEOTIDE SEQUENCE [MRNA] (ISOFORM 1)</scope>
    <scope>INTERACTION WITH SMC4</scope>
    <source>
        <tissue>Teratocarcinoma</tissue>
    </source>
</reference>
<reference key="2">
    <citation type="journal article" date="2007" name="BMC Genomics">
        <title>The full-ORF clone resource of the German cDNA consortium.</title>
        <authorList>
            <person name="Bechtel S."/>
            <person name="Rosenfelder H."/>
            <person name="Duda A."/>
            <person name="Schmidt C.P."/>
            <person name="Ernst U."/>
            <person name="Wellenreuther R."/>
            <person name="Mehrle A."/>
            <person name="Schuster C."/>
            <person name="Bahr A."/>
            <person name="Bloecker H."/>
            <person name="Heubner D."/>
            <person name="Hoerlein A."/>
            <person name="Michel G."/>
            <person name="Wedler H."/>
            <person name="Koehrer K."/>
            <person name="Ottenwaelder B."/>
            <person name="Poustka A."/>
            <person name="Wiemann S."/>
            <person name="Schupp I."/>
        </authorList>
    </citation>
    <scope>NUCLEOTIDE SEQUENCE [LARGE SCALE MRNA] (ISOFORM 1)</scope>
    <source>
        <tissue>Lymph node</tissue>
    </source>
</reference>
<reference key="3">
    <citation type="journal article" date="2004" name="Nature">
        <title>DNA sequence and analysis of human chromosome 9.</title>
        <authorList>
            <person name="Humphray S.J."/>
            <person name="Oliver K."/>
            <person name="Hunt A.R."/>
            <person name="Plumb R.W."/>
            <person name="Loveland J.E."/>
            <person name="Howe K.L."/>
            <person name="Andrews T.D."/>
            <person name="Searle S."/>
            <person name="Hunt S.E."/>
            <person name="Scott C.E."/>
            <person name="Jones M.C."/>
            <person name="Ainscough R."/>
            <person name="Almeida J.P."/>
            <person name="Ambrose K.D."/>
            <person name="Ashwell R.I.S."/>
            <person name="Babbage A.K."/>
            <person name="Babbage S."/>
            <person name="Bagguley C.L."/>
            <person name="Bailey J."/>
            <person name="Banerjee R."/>
            <person name="Barker D.J."/>
            <person name="Barlow K.F."/>
            <person name="Bates K."/>
            <person name="Beasley H."/>
            <person name="Beasley O."/>
            <person name="Bird C.P."/>
            <person name="Bray-Allen S."/>
            <person name="Brown A.J."/>
            <person name="Brown J.Y."/>
            <person name="Burford D."/>
            <person name="Burrill W."/>
            <person name="Burton J."/>
            <person name="Carder C."/>
            <person name="Carter N.P."/>
            <person name="Chapman J.C."/>
            <person name="Chen Y."/>
            <person name="Clarke G."/>
            <person name="Clark S.Y."/>
            <person name="Clee C.M."/>
            <person name="Clegg S."/>
            <person name="Collier R.E."/>
            <person name="Corby N."/>
            <person name="Crosier M."/>
            <person name="Cummings A.T."/>
            <person name="Davies J."/>
            <person name="Dhami P."/>
            <person name="Dunn M."/>
            <person name="Dutta I."/>
            <person name="Dyer L.W."/>
            <person name="Earthrowl M.E."/>
            <person name="Faulkner L."/>
            <person name="Fleming C.J."/>
            <person name="Frankish A."/>
            <person name="Frankland J.A."/>
            <person name="French L."/>
            <person name="Fricker D.G."/>
            <person name="Garner P."/>
            <person name="Garnett J."/>
            <person name="Ghori J."/>
            <person name="Gilbert J.G.R."/>
            <person name="Glison C."/>
            <person name="Grafham D.V."/>
            <person name="Gribble S."/>
            <person name="Griffiths C."/>
            <person name="Griffiths-Jones S."/>
            <person name="Grocock R."/>
            <person name="Guy J."/>
            <person name="Hall R.E."/>
            <person name="Hammond S."/>
            <person name="Harley J.L."/>
            <person name="Harrison E.S.I."/>
            <person name="Hart E.A."/>
            <person name="Heath P.D."/>
            <person name="Henderson C.D."/>
            <person name="Hopkins B.L."/>
            <person name="Howard P.J."/>
            <person name="Howden P.J."/>
            <person name="Huckle E."/>
            <person name="Johnson C."/>
            <person name="Johnson D."/>
            <person name="Joy A.A."/>
            <person name="Kay M."/>
            <person name="Keenan S."/>
            <person name="Kershaw J.K."/>
            <person name="Kimberley A.M."/>
            <person name="King A."/>
            <person name="Knights A."/>
            <person name="Laird G.K."/>
            <person name="Langford C."/>
            <person name="Lawlor S."/>
            <person name="Leongamornlert D.A."/>
            <person name="Leversha M."/>
            <person name="Lloyd C."/>
            <person name="Lloyd D.M."/>
            <person name="Lovell J."/>
            <person name="Martin S."/>
            <person name="Mashreghi-Mohammadi M."/>
            <person name="Matthews L."/>
            <person name="McLaren S."/>
            <person name="McLay K.E."/>
            <person name="McMurray A."/>
            <person name="Milne S."/>
            <person name="Nickerson T."/>
            <person name="Nisbett J."/>
            <person name="Nordsiek G."/>
            <person name="Pearce A.V."/>
            <person name="Peck A.I."/>
            <person name="Porter K.M."/>
            <person name="Pandian R."/>
            <person name="Pelan S."/>
            <person name="Phillimore B."/>
            <person name="Povey S."/>
            <person name="Ramsey Y."/>
            <person name="Rand V."/>
            <person name="Scharfe M."/>
            <person name="Sehra H.K."/>
            <person name="Shownkeen R."/>
            <person name="Sims S.K."/>
            <person name="Skuce C.D."/>
            <person name="Smith M."/>
            <person name="Steward C.A."/>
            <person name="Swarbreck D."/>
            <person name="Sycamore N."/>
            <person name="Tester J."/>
            <person name="Thorpe A."/>
            <person name="Tracey A."/>
            <person name="Tromans A."/>
            <person name="Thomas D.W."/>
            <person name="Wall M."/>
            <person name="Wallis J.M."/>
            <person name="West A.P."/>
            <person name="Whitehead S.L."/>
            <person name="Willey D.L."/>
            <person name="Williams S.A."/>
            <person name="Wilming L."/>
            <person name="Wray P.W."/>
            <person name="Young L."/>
            <person name="Ashurst J.L."/>
            <person name="Coulson A."/>
            <person name="Blocker H."/>
            <person name="Durbin R.M."/>
            <person name="Sulston J.E."/>
            <person name="Hubbard T."/>
            <person name="Jackson M.J."/>
            <person name="Bentley D.R."/>
            <person name="Beck S."/>
            <person name="Rogers J."/>
            <person name="Dunham I."/>
        </authorList>
    </citation>
    <scope>NUCLEOTIDE SEQUENCE [LARGE SCALE GENOMIC DNA]</scope>
</reference>
<reference key="4">
    <citation type="submission" date="2005-07" db="EMBL/GenBank/DDBJ databases">
        <authorList>
            <person name="Mural R.J."/>
            <person name="Istrail S."/>
            <person name="Sutton G.G."/>
            <person name="Florea L."/>
            <person name="Halpern A.L."/>
            <person name="Mobarry C.M."/>
            <person name="Lippert R."/>
            <person name="Walenz B."/>
            <person name="Shatkay H."/>
            <person name="Dew I."/>
            <person name="Miller J.R."/>
            <person name="Flanigan M.J."/>
            <person name="Edwards N.J."/>
            <person name="Bolanos R."/>
            <person name="Fasulo D."/>
            <person name="Halldorsson B.V."/>
            <person name="Hannenhalli S."/>
            <person name="Turner R."/>
            <person name="Yooseph S."/>
            <person name="Lu F."/>
            <person name="Nusskern D.R."/>
            <person name="Shue B.C."/>
            <person name="Zheng X.H."/>
            <person name="Zhong F."/>
            <person name="Delcher A.L."/>
            <person name="Huson D.H."/>
            <person name="Kravitz S.A."/>
            <person name="Mouchard L."/>
            <person name="Reinert K."/>
            <person name="Remington K.A."/>
            <person name="Clark A.G."/>
            <person name="Waterman M.S."/>
            <person name="Eichler E.E."/>
            <person name="Adams M.D."/>
            <person name="Hunkapiller M.W."/>
            <person name="Myers E.W."/>
            <person name="Venter J.C."/>
        </authorList>
    </citation>
    <scope>NUCLEOTIDE SEQUENCE [LARGE SCALE GENOMIC DNA]</scope>
</reference>
<reference key="5">
    <citation type="journal article" date="2004" name="Genome Res.">
        <title>The status, quality, and expansion of the NIH full-length cDNA project: the Mammalian Gene Collection (MGC).</title>
        <authorList>
            <consortium name="The MGC Project Team"/>
        </authorList>
    </citation>
    <scope>NUCLEOTIDE SEQUENCE [LARGE SCALE MRNA] (ISOFORM 1)</scope>
    <source>
        <tissue>Brain</tissue>
    </source>
</reference>
<reference key="6">
    <citation type="submission" date="1998-12" db="EMBL/GenBank/DDBJ databases">
        <title>Functional prediction of the coding sequences of 32 new genes deduced by analysis of cDNA clones from human fetal liver.</title>
        <authorList>
            <person name="Zhang C."/>
            <person name="Yu Y."/>
            <person name="Zhang S."/>
            <person name="Ouyang S."/>
            <person name="Luo L."/>
            <person name="Wei H."/>
            <person name="Zhou G."/>
            <person name="Zhou W."/>
            <person name="Bi J."/>
            <person name="Zhang Y."/>
            <person name="Liu M."/>
            <person name="He F."/>
        </authorList>
    </citation>
    <scope>NUCLEOTIDE SEQUENCE [LARGE SCALE MRNA] OF 907-1197 (ISOFORM 2)</scope>
    <source>
        <tissue>Fetal liver</tissue>
    </source>
</reference>
<reference key="7">
    <citation type="journal article" date="2004" name="Mol. Biol. Evol.">
        <title>The evolution of SMC proteins: phylogenetic analysis and structural implications.</title>
        <authorList>
            <person name="Cobbe N."/>
            <person name="Heck M.M.S."/>
        </authorList>
    </citation>
    <scope>IDENTIFICATION</scope>
</reference>
<reference key="8">
    <citation type="journal article" date="2000" name="Mol. Cell. Biol.">
        <title>A human condensin complex containing hCAP-C-hCAP-E and CNAP1, a homolog of Xenopus XCAP-D2, colocalizes with phosphorylated histone H3 during the early stage of mitotic chromosome condensation.</title>
        <authorList>
            <person name="Schmiesing J.A."/>
            <person name="Gregson H.C."/>
            <person name="Zhou S."/>
            <person name="Yokomori K."/>
        </authorList>
    </citation>
    <scope>IDENTIFICATION IN A CONDENSIN COMPLEX WITH SMC4 AND CNAP1</scope>
    <scope>SUBCELLULAR LOCATION</scope>
</reference>
<reference key="9">
    <citation type="journal article" date="2001" name="J. Biol. Chem.">
        <title>Chromosome condensation by a human condensin complex in Xenopus egg extracts.</title>
        <authorList>
            <person name="Kimura K."/>
            <person name="Cuvier O."/>
            <person name="Hirano T."/>
        </authorList>
    </citation>
    <scope>IDENTIFICATION IN A CONDENSIN COMPLEX WITH SMC4; BRRN1; CNAP1 AND CAPG</scope>
    <scope>FUNCTION OF THE COMPLEX</scope>
</reference>
<reference key="10">
    <citation type="journal article" date="2009" name="Science">
        <title>Lysine acetylation targets protein complexes and co-regulates major cellular functions.</title>
        <authorList>
            <person name="Choudhary C."/>
            <person name="Kumar C."/>
            <person name="Gnad F."/>
            <person name="Nielsen M.L."/>
            <person name="Rehman M."/>
            <person name="Walther T.C."/>
            <person name="Olsen J.V."/>
            <person name="Mann M."/>
        </authorList>
    </citation>
    <scope>ACETYLATION [LARGE SCALE ANALYSIS] AT LYS-114; LYS-222; LYS-677; LYS-1158 AND LYS-1160</scope>
    <scope>IDENTIFICATION BY MASS SPECTROMETRY [LARGE SCALE ANALYSIS]</scope>
</reference>
<reference key="11">
    <citation type="journal article" date="2011" name="BMC Syst. Biol.">
        <title>Initial characterization of the human central proteome.</title>
        <authorList>
            <person name="Burkard T.R."/>
            <person name="Planyavsky M."/>
            <person name="Kaupe I."/>
            <person name="Breitwieser F.P."/>
            <person name="Buerckstuemmer T."/>
            <person name="Bennett K.L."/>
            <person name="Superti-Furga G."/>
            <person name="Colinge J."/>
        </authorList>
    </citation>
    <scope>IDENTIFICATION BY MASS SPECTROMETRY [LARGE SCALE ANALYSIS]</scope>
</reference>
<reference key="12">
    <citation type="journal article" date="2013" name="Nature">
        <title>The bromodomain protein Brd4 insulates chromatin from DNA damage signalling.</title>
        <authorList>
            <person name="Floyd S.R."/>
            <person name="Pacold M.E."/>
            <person name="Huang Q."/>
            <person name="Clarke S.M."/>
            <person name="Lam F.C."/>
            <person name="Cannell I.G."/>
            <person name="Bryson B.D."/>
            <person name="Rameseder J."/>
            <person name="Lee M.J."/>
            <person name="Blake E.J."/>
            <person name="Fydrych A."/>
            <person name="Ho R."/>
            <person name="Greenberger B.A."/>
            <person name="Chen G.C."/>
            <person name="Maffa A."/>
            <person name="Del Rosario A.M."/>
            <person name="Root D.E."/>
            <person name="Carpenter A.E."/>
            <person name="Hahn W.C."/>
            <person name="Sabatini D.M."/>
            <person name="Chen C.C."/>
            <person name="White F.M."/>
            <person name="Bradner J.E."/>
            <person name="Yaffe M.B."/>
        </authorList>
    </citation>
    <scope>INTERACTION WITH BRD4</scope>
</reference>
<reference key="13">
    <citation type="journal article" date="2015" name="Proteomics">
        <title>N-terminome analysis of the human mitochondrial proteome.</title>
        <authorList>
            <person name="Vaca Jacome A.S."/>
            <person name="Rabilloud T."/>
            <person name="Schaeffer-Reiss C."/>
            <person name="Rompais M."/>
            <person name="Ayoub D."/>
            <person name="Lane L."/>
            <person name="Bairoch A."/>
            <person name="Van Dorsselaer A."/>
            <person name="Carapito C."/>
        </authorList>
    </citation>
    <scope>IDENTIFICATION BY MASS SPECTROMETRY [LARGE SCALE ANALYSIS]</scope>
</reference>
<keyword id="KW-0002">3D-structure</keyword>
<keyword id="KW-0007">Acetylation</keyword>
<keyword id="KW-0025">Alternative splicing</keyword>
<keyword id="KW-0067">ATP-binding</keyword>
<keyword id="KW-0131">Cell cycle</keyword>
<keyword id="KW-0132">Cell division</keyword>
<keyword id="KW-0158">Chromosome</keyword>
<keyword id="KW-0175">Coiled coil</keyword>
<keyword id="KW-0963">Cytoplasm</keyword>
<keyword id="KW-0226">DNA condensation</keyword>
<keyword id="KW-0498">Mitosis</keyword>
<keyword id="KW-0547">Nucleotide-binding</keyword>
<keyword id="KW-0539">Nucleus</keyword>
<keyword id="KW-1267">Proteomics identification</keyword>
<keyword id="KW-1185">Reference proteome</keyword>
<organism>
    <name type="scientific">Homo sapiens</name>
    <name type="common">Human</name>
    <dbReference type="NCBI Taxonomy" id="9606"/>
    <lineage>
        <taxon>Eukaryota</taxon>
        <taxon>Metazoa</taxon>
        <taxon>Chordata</taxon>
        <taxon>Craniata</taxon>
        <taxon>Vertebrata</taxon>
        <taxon>Euteleostomi</taxon>
        <taxon>Mammalia</taxon>
        <taxon>Eutheria</taxon>
        <taxon>Euarchontoglires</taxon>
        <taxon>Primates</taxon>
        <taxon>Haplorrhini</taxon>
        <taxon>Catarrhini</taxon>
        <taxon>Hominidae</taxon>
        <taxon>Homo</taxon>
    </lineage>
</organism>
<name>SMC2_HUMAN</name>
<dbReference type="EMBL" id="AF092563">
    <property type="protein sequence ID" value="AAC72360.1"/>
    <property type="status" value="ALT_FRAME"/>
    <property type="molecule type" value="mRNA"/>
</dbReference>
<dbReference type="EMBL" id="AL833191">
    <property type="protein sequence ID" value="CAI46187.1"/>
    <property type="molecule type" value="mRNA"/>
</dbReference>
<dbReference type="EMBL" id="AL161791">
    <property type="status" value="NOT_ANNOTATED_CDS"/>
    <property type="molecule type" value="Genomic_DNA"/>
</dbReference>
<dbReference type="EMBL" id="AL354938">
    <property type="status" value="NOT_ANNOTATED_CDS"/>
    <property type="molecule type" value="Genomic_DNA"/>
</dbReference>
<dbReference type="EMBL" id="CH471105">
    <property type="protein sequence ID" value="EAW58973.1"/>
    <property type="molecule type" value="Genomic_DNA"/>
</dbReference>
<dbReference type="EMBL" id="BC130385">
    <property type="protein sequence ID" value="AAI30386.1"/>
    <property type="molecule type" value="mRNA"/>
</dbReference>
<dbReference type="EMBL" id="AF113673">
    <property type="protein sequence ID" value="AAF29579.1"/>
    <property type="status" value="ALT_INIT"/>
    <property type="molecule type" value="mRNA"/>
</dbReference>
<dbReference type="EMBL" id="BN000163">
    <property type="protein sequence ID" value="CAD89875.1"/>
    <property type="molecule type" value="mRNA"/>
</dbReference>
<dbReference type="CCDS" id="CCDS35086.1">
    <molecule id="O95347-1"/>
</dbReference>
<dbReference type="RefSeq" id="NP_001036015.1">
    <molecule id="O95347-1"/>
    <property type="nucleotide sequence ID" value="NM_001042550.2"/>
</dbReference>
<dbReference type="RefSeq" id="NP_001036016.1">
    <molecule id="O95347-1"/>
    <property type="nucleotide sequence ID" value="NM_001042551.2"/>
</dbReference>
<dbReference type="RefSeq" id="NP_001252531.1">
    <molecule id="O95347-1"/>
    <property type="nucleotide sequence ID" value="NM_001265602.2"/>
</dbReference>
<dbReference type="RefSeq" id="NP_006435.2">
    <molecule id="O95347-1"/>
    <property type="nucleotide sequence ID" value="NM_006444.3"/>
</dbReference>
<dbReference type="RefSeq" id="XP_006716996.1">
    <molecule id="O95347-1"/>
    <property type="nucleotide sequence ID" value="XM_006716933.4"/>
</dbReference>
<dbReference type="RefSeq" id="XP_011516450.1">
    <molecule id="O95347-1"/>
    <property type="nucleotide sequence ID" value="XM_011518148.3"/>
</dbReference>
<dbReference type="RefSeq" id="XP_011516451.1">
    <molecule id="O95347-1"/>
    <property type="nucleotide sequence ID" value="XM_011518149.4"/>
</dbReference>
<dbReference type="RefSeq" id="XP_011516455.1">
    <molecule id="O95347-2"/>
    <property type="nucleotide sequence ID" value="XM_011518153.2"/>
</dbReference>
<dbReference type="RefSeq" id="XP_016869695.1">
    <molecule id="O95347-1"/>
    <property type="nucleotide sequence ID" value="XM_017014206.2"/>
</dbReference>
<dbReference type="RefSeq" id="XP_016869696.1">
    <property type="nucleotide sequence ID" value="XM_017014207.1"/>
</dbReference>
<dbReference type="RefSeq" id="XP_016869697.1">
    <molecule id="O95347-1"/>
    <property type="nucleotide sequence ID" value="XM_017014208.2"/>
</dbReference>
<dbReference type="RefSeq" id="XP_054217742.1">
    <molecule id="O95347-1"/>
    <property type="nucleotide sequence ID" value="XM_054361767.1"/>
</dbReference>
<dbReference type="RefSeq" id="XP_054217743.1">
    <molecule id="O95347-1"/>
    <property type="nucleotide sequence ID" value="XM_054361768.1"/>
</dbReference>
<dbReference type="RefSeq" id="XP_054217744.1">
    <molecule id="O95347-1"/>
    <property type="nucleotide sequence ID" value="XM_054361769.1"/>
</dbReference>
<dbReference type="RefSeq" id="XP_054217745.1">
    <molecule id="O95347-1"/>
    <property type="nucleotide sequence ID" value="XM_054361770.1"/>
</dbReference>
<dbReference type="RefSeq" id="XP_054217746.1">
    <molecule id="O95347-1"/>
    <property type="nucleotide sequence ID" value="XM_054361771.1"/>
</dbReference>
<dbReference type="RefSeq" id="XP_054217747.1">
    <molecule id="O95347-1"/>
    <property type="nucleotide sequence ID" value="XM_054361772.1"/>
</dbReference>
<dbReference type="RefSeq" id="XP_054217758.1">
    <molecule id="O95347-2"/>
    <property type="nucleotide sequence ID" value="XM_054361783.1"/>
</dbReference>
<dbReference type="PDB" id="4U4P">
    <property type="method" value="X-ray"/>
    <property type="resolution" value="1.89 A"/>
    <property type="chains" value="A=476-707"/>
</dbReference>
<dbReference type="PDBsum" id="4U4P"/>
<dbReference type="EMDB" id="EMD-10827"/>
<dbReference type="EMDB" id="EMD-10833"/>
<dbReference type="SMR" id="O95347"/>
<dbReference type="BioGRID" id="115841">
    <property type="interactions" value="334"/>
</dbReference>
<dbReference type="ComplexPortal" id="CPX-979">
    <property type="entry name" value="Condensin I complex"/>
</dbReference>
<dbReference type="ComplexPortal" id="CPX-985">
    <property type="entry name" value="Condensin II complex"/>
</dbReference>
<dbReference type="CORUM" id="O95347"/>
<dbReference type="DIP" id="DIP-35422N"/>
<dbReference type="FunCoup" id="O95347">
    <property type="interactions" value="3836"/>
</dbReference>
<dbReference type="IntAct" id="O95347">
    <property type="interactions" value="133"/>
</dbReference>
<dbReference type="MINT" id="O95347"/>
<dbReference type="STRING" id="9606.ENSP00000286398"/>
<dbReference type="ChEMBL" id="CHEMBL4105890"/>
<dbReference type="DrugCentral" id="O95347"/>
<dbReference type="GlyGen" id="O95347">
    <property type="glycosylation" value="4 sites, 1 O-linked glycan (4 sites)"/>
</dbReference>
<dbReference type="iPTMnet" id="O95347"/>
<dbReference type="MetOSite" id="O95347"/>
<dbReference type="PhosphoSitePlus" id="O95347"/>
<dbReference type="SwissPalm" id="O95347"/>
<dbReference type="BioMuta" id="SMC2"/>
<dbReference type="jPOST" id="O95347"/>
<dbReference type="MassIVE" id="O95347"/>
<dbReference type="PaxDb" id="9606-ENSP00000286398"/>
<dbReference type="PeptideAtlas" id="O95347"/>
<dbReference type="ProteomicsDB" id="50812">
    <molecule id="O95347-1"/>
</dbReference>
<dbReference type="ProteomicsDB" id="50813">
    <molecule id="O95347-2"/>
</dbReference>
<dbReference type="Pumba" id="O95347"/>
<dbReference type="Antibodypedia" id="14701">
    <property type="antibodies" value="274 antibodies from 32 providers"/>
</dbReference>
<dbReference type="DNASU" id="10592"/>
<dbReference type="Ensembl" id="ENST00000286398.11">
    <molecule id="O95347-1"/>
    <property type="protein sequence ID" value="ENSP00000286398.7"/>
    <property type="gene ID" value="ENSG00000136824.19"/>
</dbReference>
<dbReference type="Ensembl" id="ENST00000374787.7">
    <molecule id="O95347-1"/>
    <property type="protein sequence ID" value="ENSP00000363919.3"/>
    <property type="gene ID" value="ENSG00000136824.19"/>
</dbReference>
<dbReference type="Ensembl" id="ENST00000374793.8">
    <molecule id="O95347-1"/>
    <property type="protein sequence ID" value="ENSP00000363925.3"/>
    <property type="gene ID" value="ENSG00000136824.19"/>
</dbReference>
<dbReference type="GeneID" id="10592"/>
<dbReference type="KEGG" id="hsa:10592"/>
<dbReference type="MANE-Select" id="ENST00000374793.8">
    <property type="protein sequence ID" value="ENSP00000363925.3"/>
    <property type="RefSeq nucleotide sequence ID" value="NM_006444.3"/>
    <property type="RefSeq protein sequence ID" value="NP_006435.2"/>
</dbReference>
<dbReference type="UCSC" id="uc004bbw.4">
    <molecule id="O95347-1"/>
    <property type="organism name" value="human"/>
</dbReference>
<dbReference type="AGR" id="HGNC:14011"/>
<dbReference type="CTD" id="10592"/>
<dbReference type="DisGeNET" id="10592"/>
<dbReference type="GeneCards" id="SMC2"/>
<dbReference type="HGNC" id="HGNC:14011">
    <property type="gene designation" value="SMC2"/>
</dbReference>
<dbReference type="HPA" id="ENSG00000136824">
    <property type="expression patterns" value="Tissue enhanced (lymphoid)"/>
</dbReference>
<dbReference type="MIM" id="605576">
    <property type="type" value="gene"/>
</dbReference>
<dbReference type="neXtProt" id="NX_O95347"/>
<dbReference type="OpenTargets" id="ENSG00000136824"/>
<dbReference type="PharmGKB" id="PA37833"/>
<dbReference type="VEuPathDB" id="HostDB:ENSG00000136824"/>
<dbReference type="eggNOG" id="KOG0933">
    <property type="taxonomic scope" value="Eukaryota"/>
</dbReference>
<dbReference type="GeneTree" id="ENSGT00550000074857"/>
<dbReference type="HOGENOM" id="CLU_001042_9_0_1"/>
<dbReference type="InParanoid" id="O95347"/>
<dbReference type="OMA" id="THNKIAM"/>
<dbReference type="OrthoDB" id="10255539at2759"/>
<dbReference type="PAN-GO" id="O95347">
    <property type="GO annotations" value="5 GO annotations based on evolutionary models"/>
</dbReference>
<dbReference type="PhylomeDB" id="O95347"/>
<dbReference type="TreeFam" id="TF101157"/>
<dbReference type="PathwayCommons" id="O95347"/>
<dbReference type="Reactome" id="R-HSA-2299718">
    <property type="pathway name" value="Condensation of Prophase Chromosomes"/>
</dbReference>
<dbReference type="Reactome" id="R-HSA-2514853">
    <property type="pathway name" value="Condensation of Prometaphase Chromosomes"/>
</dbReference>
<dbReference type="SignaLink" id="O95347"/>
<dbReference type="SIGNOR" id="O95347"/>
<dbReference type="BioGRID-ORCS" id="10592">
    <property type="hits" value="789 hits in 1139 CRISPR screens"/>
</dbReference>
<dbReference type="CD-CODE" id="91857CE7">
    <property type="entry name" value="Nucleolus"/>
</dbReference>
<dbReference type="ChiTaRS" id="SMC2">
    <property type="organism name" value="human"/>
</dbReference>
<dbReference type="EvolutionaryTrace" id="O95347"/>
<dbReference type="GeneWiki" id="SMC2"/>
<dbReference type="GenomeRNAi" id="10592"/>
<dbReference type="Pharos" id="O95347">
    <property type="development level" value="Tchem"/>
</dbReference>
<dbReference type="PRO" id="PR:O95347"/>
<dbReference type="Proteomes" id="UP000005640">
    <property type="component" value="Chromosome 9"/>
</dbReference>
<dbReference type="RNAct" id="O95347">
    <property type="molecule type" value="protein"/>
</dbReference>
<dbReference type="Bgee" id="ENSG00000136824">
    <property type="expression patterns" value="Expressed in ventricular zone and 181 other cell types or tissues"/>
</dbReference>
<dbReference type="ExpressionAtlas" id="O95347">
    <property type="expression patterns" value="baseline and differential"/>
</dbReference>
<dbReference type="GO" id="GO:0000785">
    <property type="term" value="C:chromatin"/>
    <property type="evidence" value="ECO:0000318"/>
    <property type="project" value="GO_Central"/>
</dbReference>
<dbReference type="GO" id="GO:0000793">
    <property type="term" value="C:condensed chromosome"/>
    <property type="evidence" value="ECO:0000314"/>
    <property type="project" value="UniProtKB"/>
</dbReference>
<dbReference type="GO" id="GO:0000794">
    <property type="term" value="C:condensed nuclear chromosome"/>
    <property type="evidence" value="ECO:0000266"/>
    <property type="project" value="ComplexPortal"/>
</dbReference>
<dbReference type="GO" id="GO:0000796">
    <property type="term" value="C:condensin complex"/>
    <property type="evidence" value="ECO:0000314"/>
    <property type="project" value="UniProtKB"/>
</dbReference>
<dbReference type="GO" id="GO:0005737">
    <property type="term" value="C:cytoplasm"/>
    <property type="evidence" value="ECO:0000314"/>
    <property type="project" value="UniProtKB"/>
</dbReference>
<dbReference type="GO" id="GO:0005829">
    <property type="term" value="C:cytosol"/>
    <property type="evidence" value="ECO:0000304"/>
    <property type="project" value="Reactome"/>
</dbReference>
<dbReference type="GO" id="GO:0070062">
    <property type="term" value="C:extracellular exosome"/>
    <property type="evidence" value="ECO:0007005"/>
    <property type="project" value="UniProtKB"/>
</dbReference>
<dbReference type="GO" id="GO:0000228">
    <property type="term" value="C:nuclear chromosome"/>
    <property type="evidence" value="ECO:0000314"/>
    <property type="project" value="UniProtKB"/>
</dbReference>
<dbReference type="GO" id="GO:0005730">
    <property type="term" value="C:nucleolus"/>
    <property type="evidence" value="ECO:0000314"/>
    <property type="project" value="HPA"/>
</dbReference>
<dbReference type="GO" id="GO:0005654">
    <property type="term" value="C:nucleoplasm"/>
    <property type="evidence" value="ECO:0000314"/>
    <property type="project" value="HPA"/>
</dbReference>
<dbReference type="GO" id="GO:0005634">
    <property type="term" value="C:nucleus"/>
    <property type="evidence" value="ECO:0000314"/>
    <property type="project" value="UniProtKB"/>
</dbReference>
<dbReference type="GO" id="GO:0005524">
    <property type="term" value="F:ATP binding"/>
    <property type="evidence" value="ECO:0007669"/>
    <property type="project" value="UniProtKB-KW"/>
</dbReference>
<dbReference type="GO" id="GO:0016887">
    <property type="term" value="F:ATP hydrolysis activity"/>
    <property type="evidence" value="ECO:0007669"/>
    <property type="project" value="InterPro"/>
</dbReference>
<dbReference type="GO" id="GO:0003682">
    <property type="term" value="F:chromatin binding"/>
    <property type="evidence" value="ECO:0000318"/>
    <property type="project" value="GO_Central"/>
</dbReference>
<dbReference type="GO" id="GO:0003697">
    <property type="term" value="F:single-stranded DNA binding"/>
    <property type="evidence" value="ECO:0007669"/>
    <property type="project" value="Ensembl"/>
</dbReference>
<dbReference type="GO" id="GO:0051301">
    <property type="term" value="P:cell division"/>
    <property type="evidence" value="ECO:0007669"/>
    <property type="project" value="UniProtKB-KW"/>
</dbReference>
<dbReference type="GO" id="GO:0051383">
    <property type="term" value="P:kinetochore organization"/>
    <property type="evidence" value="ECO:0007669"/>
    <property type="project" value="Ensembl"/>
</dbReference>
<dbReference type="GO" id="GO:0010032">
    <property type="term" value="P:meiotic chromosome condensation"/>
    <property type="evidence" value="ECO:0007669"/>
    <property type="project" value="Ensembl"/>
</dbReference>
<dbReference type="GO" id="GO:0045132">
    <property type="term" value="P:meiotic chromosome segregation"/>
    <property type="evidence" value="ECO:0007669"/>
    <property type="project" value="Ensembl"/>
</dbReference>
<dbReference type="GO" id="GO:0007076">
    <property type="term" value="P:mitotic chromosome condensation"/>
    <property type="evidence" value="ECO:0000314"/>
    <property type="project" value="UniProtKB"/>
</dbReference>
<dbReference type="GO" id="GO:1905821">
    <property type="term" value="P:positive regulation of chromosome condensation"/>
    <property type="evidence" value="ECO:0000314"/>
    <property type="project" value="ComplexPortal"/>
</dbReference>
<dbReference type="GO" id="GO:0051984">
    <property type="term" value="P:positive regulation of chromosome segregation"/>
    <property type="evidence" value="ECO:0000266"/>
    <property type="project" value="ComplexPortal"/>
</dbReference>
<dbReference type="GO" id="GO:1905820">
    <property type="term" value="P:positive regulation of chromosome separation"/>
    <property type="evidence" value="ECO:0000266"/>
    <property type="project" value="ComplexPortal"/>
</dbReference>
<dbReference type="CDD" id="cd03273">
    <property type="entry name" value="ABC_SMC2_euk"/>
    <property type="match status" value="1"/>
</dbReference>
<dbReference type="FunFam" id="1.20.1060.20:FF:000005">
    <property type="entry name" value="Structural maintenance of chromosomes 2"/>
    <property type="match status" value="1"/>
</dbReference>
<dbReference type="FunFam" id="3.30.70.1620:FF:000005">
    <property type="entry name" value="Structural maintenance of chromosomes 2"/>
    <property type="match status" value="1"/>
</dbReference>
<dbReference type="FunFam" id="3.40.50.300:FF:000278">
    <property type="entry name" value="Structural maintenance of chromosomes 2"/>
    <property type="match status" value="1"/>
</dbReference>
<dbReference type="FunFam" id="3.40.50.300:FF:000385">
    <property type="entry name" value="Structural maintenance of chromosomes 2"/>
    <property type="match status" value="1"/>
</dbReference>
<dbReference type="Gene3D" id="1.20.1060.20">
    <property type="match status" value="1"/>
</dbReference>
<dbReference type="Gene3D" id="3.30.70.1620">
    <property type="match status" value="1"/>
</dbReference>
<dbReference type="Gene3D" id="3.40.50.300">
    <property type="entry name" value="P-loop containing nucleotide triphosphate hydrolases"/>
    <property type="match status" value="2"/>
</dbReference>
<dbReference type="InterPro" id="IPR027417">
    <property type="entry name" value="P-loop_NTPase"/>
</dbReference>
<dbReference type="InterPro" id="IPR003395">
    <property type="entry name" value="RecF/RecN/SMC_N"/>
</dbReference>
<dbReference type="InterPro" id="IPR024704">
    <property type="entry name" value="SMC"/>
</dbReference>
<dbReference type="InterPro" id="IPR027120">
    <property type="entry name" value="Smc2_ABC"/>
</dbReference>
<dbReference type="InterPro" id="IPR010935">
    <property type="entry name" value="SMC_hinge"/>
</dbReference>
<dbReference type="InterPro" id="IPR036277">
    <property type="entry name" value="SMC_hinge_sf"/>
</dbReference>
<dbReference type="PANTHER" id="PTHR43977">
    <property type="entry name" value="STRUCTURAL MAINTENANCE OF CHROMOSOMES PROTEIN 3"/>
    <property type="match status" value="1"/>
</dbReference>
<dbReference type="Pfam" id="PF06470">
    <property type="entry name" value="SMC_hinge"/>
    <property type="match status" value="1"/>
</dbReference>
<dbReference type="Pfam" id="PF02463">
    <property type="entry name" value="SMC_N"/>
    <property type="match status" value="2"/>
</dbReference>
<dbReference type="PIRSF" id="PIRSF005719">
    <property type="entry name" value="SMC"/>
    <property type="match status" value="1"/>
</dbReference>
<dbReference type="SMART" id="SM00968">
    <property type="entry name" value="SMC_hinge"/>
    <property type="match status" value="1"/>
</dbReference>
<dbReference type="SUPFAM" id="SSF52540">
    <property type="entry name" value="P-loop containing nucleoside triphosphate hydrolases"/>
    <property type="match status" value="1"/>
</dbReference>
<dbReference type="SUPFAM" id="SSF75553">
    <property type="entry name" value="Smc hinge domain"/>
    <property type="match status" value="1"/>
</dbReference>
<evidence type="ECO:0000250" key="1"/>
<evidence type="ECO:0000255" key="2"/>
<evidence type="ECO:0000269" key="3">
    <source>
    </source>
</evidence>
<evidence type="ECO:0000269" key="4">
    <source>
    </source>
</evidence>
<evidence type="ECO:0000269" key="5">
    <source>
    </source>
</evidence>
<evidence type="ECO:0000269" key="6">
    <source>
    </source>
</evidence>
<evidence type="ECO:0000303" key="7">
    <source ref="6"/>
</evidence>
<evidence type="ECO:0000305" key="8"/>
<evidence type="ECO:0007744" key="9">
    <source>
    </source>
</evidence>
<evidence type="ECO:0007829" key="10">
    <source>
        <dbReference type="PDB" id="4U4P"/>
    </source>
</evidence>
<sequence length="1197" mass="135656">MHIKSIILEGFKSYAQRTEVNGFDPLFNAITGLNGSGKSNILDSICFLLGISNLSQVRASNLQDLVYKNGQAGITKASVSITFDNSDKKQSPLGFEVHDEITVTRQVVIGGRNKYLINGVNANNTRVQDLFCSVGLNVNNPHFLIMQGRITKVLNMKPPEILSMIEEAAGTRMYEYKKIAAQKTIEKKEAKLKEIKTILEEEITPTIQKLKEERSSYLEYQKVMREIEHLSRLYIAYQFLLAEDTKVRSAEELKEMQDKVIKLQEELSENDKKIKALNHEIEELEKRKDKETGGILRSLEDALAEAQRVNTKSQSAFDLKKKNLACEESKRKELEKNMVEDSKTLAAKEKEVKKITDGLHALQEASNKDAEALAAAQQHFNAVSAGLSSNEDGAEATLAGQMMACKNDISKAQTEAKQAQMKLKHAQQELKNKQAEVKKMDSGYRKDQEALEAVKRLKEKLEAEMKKLNYEENKEESLLEKRRQLSRDIGRLKETYEALLARFPNLRFAYKDPEKNWNRNCVKGLVASLISVKDTSATTALELVAGERLYNVVVDTEVTGKKLLERGELKRRYTIIPLNKISARCIAPETLRVAQNLVGPDNVHVALSLVEYKPELQKAMEFVFGTTFVCDNMDNAKKVAFDKRIMTRTVTLGGDVFDPHGTLSGGARSQAASILTKFQELKDVQDELRIKENELRALEEELAGLKNTAEKYRQLKQQWEMKTEEADLLQTKLQQSSYHKQQEELDALKKTIEESEETLKNTKEIQRKAEEKYEVLENKMKNAEAERERELKDAQKKLDCAKTKADASSKKMKEKQQEVEAITLELEELKREHTSYKQQLEAVNEAIKSYESQIEVMAAEVAKNKESVNKAQEEVTKQKEVITAQDTVIKAKYAEVAKHKEQNNDSQLKIKELDHNISKHKREAEDGAAKVSKMLKDYDWINAERHLFGQPNSAYDFKTNNPKEAGQRLQKLQEMKEKLGRNVNMRAMNVLTEAEERYNDLMKKKRIVENDKSKILTTIEDLDQKKNQALNIAWQKVNKDFGSIFSTLLPGANAMLAPPEGQTVLDGLEFKVALGNTWKENLTELSGGQRSLVALSLILSMLLFKPAPIYILDEVDAALDLSHTQNIGQMLRTHFTHSQFIVVSLKEGMFNNANVLFKTKFVDGVSTVARFTQCQNGKISKEAKSKAKPPKGAHVEV</sequence>
<accession>O95347</accession>
<accession>Q6IEE0</accession>
<accession>Q9P1P2</accession>